<proteinExistence type="inferred from homology"/>
<sequence length="110" mass="12042">MFGGKGGLGNLMKQAQQMQDKMQKMQEEIAQLEVTGESGAGLVKVTINGAHNCRRVEIDPSLLEDDKEMLEDLVAAAFNDAARRIEETQKEKMASVSAGMQLPPGFKMPF</sequence>
<accession>B5Y0N6</accession>
<gene>
    <name type="ordered locus">KPK_4227</name>
</gene>
<evidence type="ECO:0000255" key="1">
    <source>
        <dbReference type="HAMAP-Rule" id="MF_00274"/>
    </source>
</evidence>
<evidence type="ECO:0000256" key="2">
    <source>
        <dbReference type="SAM" id="MobiDB-lite"/>
    </source>
</evidence>
<protein>
    <recommendedName>
        <fullName evidence="1">Nucleoid-associated protein KPK_4227</fullName>
    </recommendedName>
</protein>
<feature type="chain" id="PRO_1000114618" description="Nucleoid-associated protein KPK_4227">
    <location>
        <begin position="1"/>
        <end position="110"/>
    </location>
</feature>
<feature type="region of interest" description="Disordered" evidence="2">
    <location>
        <begin position="1"/>
        <end position="22"/>
    </location>
</feature>
<keyword id="KW-0963">Cytoplasm</keyword>
<keyword id="KW-0238">DNA-binding</keyword>
<name>Y4227_KLEP3</name>
<organism>
    <name type="scientific">Klebsiella pneumoniae (strain 342)</name>
    <dbReference type="NCBI Taxonomy" id="507522"/>
    <lineage>
        <taxon>Bacteria</taxon>
        <taxon>Pseudomonadati</taxon>
        <taxon>Pseudomonadota</taxon>
        <taxon>Gammaproteobacteria</taxon>
        <taxon>Enterobacterales</taxon>
        <taxon>Enterobacteriaceae</taxon>
        <taxon>Klebsiella/Raoultella group</taxon>
        <taxon>Klebsiella</taxon>
        <taxon>Klebsiella pneumoniae complex</taxon>
    </lineage>
</organism>
<comment type="function">
    <text evidence="1">Binds to DNA and alters its conformation. May be involved in regulation of gene expression, nucleoid organization and DNA protection.</text>
</comment>
<comment type="subunit">
    <text evidence="1">Homodimer.</text>
</comment>
<comment type="subcellular location">
    <subcellularLocation>
        <location evidence="1">Cytoplasm</location>
        <location evidence="1">Nucleoid</location>
    </subcellularLocation>
</comment>
<comment type="similarity">
    <text evidence="1">Belongs to the YbaB/EbfC family.</text>
</comment>
<reference key="1">
    <citation type="journal article" date="2008" name="PLoS Genet.">
        <title>Complete genome sequence of the N2-fixing broad host range endophyte Klebsiella pneumoniae 342 and virulence predictions verified in mice.</title>
        <authorList>
            <person name="Fouts D.E."/>
            <person name="Tyler H.L."/>
            <person name="DeBoy R.T."/>
            <person name="Daugherty S."/>
            <person name="Ren Q."/>
            <person name="Badger J.H."/>
            <person name="Durkin A.S."/>
            <person name="Huot H."/>
            <person name="Shrivastava S."/>
            <person name="Kothari S."/>
            <person name="Dodson R.J."/>
            <person name="Mohamoud Y."/>
            <person name="Khouri H."/>
            <person name="Roesch L.F.W."/>
            <person name="Krogfelt K.A."/>
            <person name="Struve C."/>
            <person name="Triplett E.W."/>
            <person name="Methe B.A."/>
        </authorList>
    </citation>
    <scope>NUCLEOTIDE SEQUENCE [LARGE SCALE GENOMIC DNA]</scope>
    <source>
        <strain>342</strain>
    </source>
</reference>
<dbReference type="EMBL" id="CP000964">
    <property type="protein sequence ID" value="ACI08954.1"/>
    <property type="molecule type" value="Genomic_DNA"/>
</dbReference>
<dbReference type="SMR" id="B5Y0N6"/>
<dbReference type="KEGG" id="kpe:KPK_4227"/>
<dbReference type="HOGENOM" id="CLU_140930_0_0_6"/>
<dbReference type="BioCyc" id="KPNE507522:GI0B-4208-MONOMER"/>
<dbReference type="Proteomes" id="UP000001734">
    <property type="component" value="Chromosome"/>
</dbReference>
<dbReference type="GO" id="GO:0043590">
    <property type="term" value="C:bacterial nucleoid"/>
    <property type="evidence" value="ECO:0007669"/>
    <property type="project" value="UniProtKB-UniRule"/>
</dbReference>
<dbReference type="GO" id="GO:0005829">
    <property type="term" value="C:cytosol"/>
    <property type="evidence" value="ECO:0007669"/>
    <property type="project" value="TreeGrafter"/>
</dbReference>
<dbReference type="GO" id="GO:0003677">
    <property type="term" value="F:DNA binding"/>
    <property type="evidence" value="ECO:0007669"/>
    <property type="project" value="UniProtKB-UniRule"/>
</dbReference>
<dbReference type="FunFam" id="3.30.1310.10:FF:000001">
    <property type="entry name" value="Nucleoid-associated protein YbaB"/>
    <property type="match status" value="1"/>
</dbReference>
<dbReference type="Gene3D" id="3.30.1310.10">
    <property type="entry name" value="Nucleoid-associated protein YbaB-like domain"/>
    <property type="match status" value="1"/>
</dbReference>
<dbReference type="HAMAP" id="MF_00274">
    <property type="entry name" value="DNA_YbaB_EbfC"/>
    <property type="match status" value="1"/>
</dbReference>
<dbReference type="InterPro" id="IPR036894">
    <property type="entry name" value="YbaB-like_sf"/>
</dbReference>
<dbReference type="InterPro" id="IPR004401">
    <property type="entry name" value="YbaB/EbfC"/>
</dbReference>
<dbReference type="NCBIfam" id="TIGR00103">
    <property type="entry name" value="DNA_YbaB_EbfC"/>
    <property type="match status" value="1"/>
</dbReference>
<dbReference type="PANTHER" id="PTHR33449">
    <property type="entry name" value="NUCLEOID-ASSOCIATED PROTEIN YBAB"/>
    <property type="match status" value="1"/>
</dbReference>
<dbReference type="PANTHER" id="PTHR33449:SF1">
    <property type="entry name" value="NUCLEOID-ASSOCIATED PROTEIN YBAB"/>
    <property type="match status" value="1"/>
</dbReference>
<dbReference type="Pfam" id="PF02575">
    <property type="entry name" value="YbaB_DNA_bd"/>
    <property type="match status" value="1"/>
</dbReference>
<dbReference type="PIRSF" id="PIRSF004555">
    <property type="entry name" value="UCP004555"/>
    <property type="match status" value="1"/>
</dbReference>
<dbReference type="SUPFAM" id="SSF82607">
    <property type="entry name" value="YbaB-like"/>
    <property type="match status" value="1"/>
</dbReference>